<reference key="1">
    <citation type="journal article" date="2004" name="Proc. Natl. Acad. Sci. U.S.A.">
        <title>Insights into the evolution of Yersinia pestis through whole-genome comparison with Yersinia pseudotuberculosis.</title>
        <authorList>
            <person name="Chain P.S.G."/>
            <person name="Carniel E."/>
            <person name="Larimer F.W."/>
            <person name="Lamerdin J."/>
            <person name="Stoutland P.O."/>
            <person name="Regala W.M."/>
            <person name="Georgescu A.M."/>
            <person name="Vergez L.M."/>
            <person name="Land M.L."/>
            <person name="Motin V.L."/>
            <person name="Brubaker R.R."/>
            <person name="Fowler J."/>
            <person name="Hinnebusch J."/>
            <person name="Marceau M."/>
            <person name="Medigue C."/>
            <person name="Simonet M."/>
            <person name="Chenal-Francisque V."/>
            <person name="Souza B."/>
            <person name="Dacheux D."/>
            <person name="Elliott J.M."/>
            <person name="Derbise A."/>
            <person name="Hauser L.J."/>
            <person name="Garcia E."/>
        </authorList>
    </citation>
    <scope>NUCLEOTIDE SEQUENCE [LARGE SCALE GENOMIC DNA]</scope>
    <source>
        <strain>IP32953</strain>
    </source>
</reference>
<accession>Q666Q7</accession>
<feature type="chain" id="PRO_0000158503" description="Ribose-5-phosphate isomerase A 1">
    <location>
        <begin position="1"/>
        <end position="218"/>
    </location>
</feature>
<feature type="active site" description="Proton acceptor" evidence="1">
    <location>
        <position position="103"/>
    </location>
</feature>
<feature type="binding site" evidence="1">
    <location>
        <begin position="28"/>
        <end position="31"/>
    </location>
    <ligand>
        <name>substrate</name>
    </ligand>
</feature>
<feature type="binding site" evidence="1">
    <location>
        <begin position="81"/>
        <end position="84"/>
    </location>
    <ligand>
        <name>substrate</name>
    </ligand>
</feature>
<feature type="binding site" evidence="1">
    <location>
        <begin position="94"/>
        <end position="97"/>
    </location>
    <ligand>
        <name>substrate</name>
    </ligand>
</feature>
<feature type="binding site" evidence="1">
    <location>
        <position position="121"/>
    </location>
    <ligand>
        <name>substrate</name>
    </ligand>
</feature>
<dbReference type="EC" id="5.3.1.6" evidence="1"/>
<dbReference type="EMBL" id="BX936398">
    <property type="protein sequence ID" value="CAH22428.1"/>
    <property type="molecule type" value="Genomic_DNA"/>
</dbReference>
<dbReference type="SMR" id="Q666Q7"/>
<dbReference type="KEGG" id="ypo:BZ17_3421"/>
<dbReference type="KEGG" id="yps:YPTB3190"/>
<dbReference type="PATRIC" id="fig|273123.14.peg.3590"/>
<dbReference type="UniPathway" id="UPA00115">
    <property type="reaction ID" value="UER00412"/>
</dbReference>
<dbReference type="Proteomes" id="UP000001011">
    <property type="component" value="Chromosome"/>
</dbReference>
<dbReference type="GO" id="GO:0005829">
    <property type="term" value="C:cytosol"/>
    <property type="evidence" value="ECO:0007669"/>
    <property type="project" value="TreeGrafter"/>
</dbReference>
<dbReference type="GO" id="GO:0004751">
    <property type="term" value="F:ribose-5-phosphate isomerase activity"/>
    <property type="evidence" value="ECO:0007669"/>
    <property type="project" value="UniProtKB-UniRule"/>
</dbReference>
<dbReference type="GO" id="GO:0006014">
    <property type="term" value="P:D-ribose metabolic process"/>
    <property type="evidence" value="ECO:0007669"/>
    <property type="project" value="TreeGrafter"/>
</dbReference>
<dbReference type="GO" id="GO:0009052">
    <property type="term" value="P:pentose-phosphate shunt, non-oxidative branch"/>
    <property type="evidence" value="ECO:0007669"/>
    <property type="project" value="UniProtKB-UniRule"/>
</dbReference>
<dbReference type="CDD" id="cd01398">
    <property type="entry name" value="RPI_A"/>
    <property type="match status" value="1"/>
</dbReference>
<dbReference type="FunFam" id="3.30.70.260:FF:000004">
    <property type="entry name" value="Ribose-5-phosphate isomerase A"/>
    <property type="match status" value="1"/>
</dbReference>
<dbReference type="FunFam" id="3.40.50.1360:FF:000001">
    <property type="entry name" value="Ribose-5-phosphate isomerase A"/>
    <property type="match status" value="1"/>
</dbReference>
<dbReference type="Gene3D" id="3.30.70.260">
    <property type="match status" value="1"/>
</dbReference>
<dbReference type="Gene3D" id="3.40.50.1360">
    <property type="match status" value="1"/>
</dbReference>
<dbReference type="HAMAP" id="MF_00170">
    <property type="entry name" value="Rib_5P_isom_A"/>
    <property type="match status" value="1"/>
</dbReference>
<dbReference type="InterPro" id="IPR037171">
    <property type="entry name" value="NagB/RpiA_transferase-like"/>
</dbReference>
<dbReference type="InterPro" id="IPR020672">
    <property type="entry name" value="Ribose5P_isomerase_typA_subgr"/>
</dbReference>
<dbReference type="InterPro" id="IPR004788">
    <property type="entry name" value="Ribose5P_isomerase_type_A"/>
</dbReference>
<dbReference type="NCBIfam" id="NF001924">
    <property type="entry name" value="PRK00702.1"/>
    <property type="match status" value="1"/>
</dbReference>
<dbReference type="NCBIfam" id="TIGR00021">
    <property type="entry name" value="rpiA"/>
    <property type="match status" value="1"/>
</dbReference>
<dbReference type="PANTHER" id="PTHR11934">
    <property type="entry name" value="RIBOSE-5-PHOSPHATE ISOMERASE"/>
    <property type="match status" value="1"/>
</dbReference>
<dbReference type="PANTHER" id="PTHR11934:SF0">
    <property type="entry name" value="RIBOSE-5-PHOSPHATE ISOMERASE"/>
    <property type="match status" value="1"/>
</dbReference>
<dbReference type="Pfam" id="PF06026">
    <property type="entry name" value="Rib_5-P_isom_A"/>
    <property type="match status" value="1"/>
</dbReference>
<dbReference type="SUPFAM" id="SSF75445">
    <property type="entry name" value="D-ribose-5-phosphate isomerase (RpiA), lid domain"/>
    <property type="match status" value="1"/>
</dbReference>
<dbReference type="SUPFAM" id="SSF100950">
    <property type="entry name" value="NagB/RpiA/CoA transferase-like"/>
    <property type="match status" value="1"/>
</dbReference>
<name>RPIA1_YERPS</name>
<sequence>MTQDELKKAVGWAALDYVKPGTIVGVGTGSTAAHFIDALGSIKHQIEGAVSSSDASTAKLKSYGIPVFDCNDVDVLDIYVDGADEINGQMQMIKGGGAALTREKIIAAIARKFICIADESKQVGVLGKFPLPVEVIPMARSYVARELIKLGGLPEYRQNVLTDNGNVILDVHNLSILDAIALENQINGIAGVVTVGLFANRGADVALIGTANGVKVIG</sequence>
<keyword id="KW-0413">Isomerase</keyword>
<comment type="function">
    <text evidence="1">Catalyzes the reversible conversion of ribose-5-phosphate to ribulose 5-phosphate.</text>
</comment>
<comment type="catalytic activity">
    <reaction evidence="1">
        <text>aldehydo-D-ribose 5-phosphate = D-ribulose 5-phosphate</text>
        <dbReference type="Rhea" id="RHEA:14657"/>
        <dbReference type="ChEBI" id="CHEBI:58121"/>
        <dbReference type="ChEBI" id="CHEBI:58273"/>
        <dbReference type="EC" id="5.3.1.6"/>
    </reaction>
</comment>
<comment type="pathway">
    <text evidence="1">Carbohydrate degradation; pentose phosphate pathway; D-ribose 5-phosphate from D-ribulose 5-phosphate (non-oxidative stage): step 1/1.</text>
</comment>
<comment type="subunit">
    <text evidence="1">Homodimer.</text>
</comment>
<comment type="similarity">
    <text evidence="1">Belongs to the ribose 5-phosphate isomerase family.</text>
</comment>
<organism>
    <name type="scientific">Yersinia pseudotuberculosis serotype I (strain IP32953)</name>
    <dbReference type="NCBI Taxonomy" id="273123"/>
    <lineage>
        <taxon>Bacteria</taxon>
        <taxon>Pseudomonadati</taxon>
        <taxon>Pseudomonadota</taxon>
        <taxon>Gammaproteobacteria</taxon>
        <taxon>Enterobacterales</taxon>
        <taxon>Yersiniaceae</taxon>
        <taxon>Yersinia</taxon>
    </lineage>
</organism>
<proteinExistence type="inferred from homology"/>
<evidence type="ECO:0000255" key="1">
    <source>
        <dbReference type="HAMAP-Rule" id="MF_00170"/>
    </source>
</evidence>
<protein>
    <recommendedName>
        <fullName evidence="1">Ribose-5-phosphate isomerase A 1</fullName>
        <ecNumber evidence="1">5.3.1.6</ecNumber>
    </recommendedName>
    <alternativeName>
        <fullName evidence="1">Phosphoriboisomerase A 1</fullName>
        <shortName evidence="1">PRI 1</shortName>
    </alternativeName>
</protein>
<gene>
    <name evidence="1" type="primary">rpiA1</name>
    <name type="ordered locus">YPTB3190</name>
</gene>